<proteinExistence type="inferred from homology"/>
<organism>
    <name type="scientific">Streptococcus pneumoniae (strain JJA)</name>
    <dbReference type="NCBI Taxonomy" id="488222"/>
    <lineage>
        <taxon>Bacteria</taxon>
        <taxon>Bacillati</taxon>
        <taxon>Bacillota</taxon>
        <taxon>Bacilli</taxon>
        <taxon>Lactobacillales</taxon>
        <taxon>Streptococcaceae</taxon>
        <taxon>Streptococcus</taxon>
    </lineage>
</organism>
<sequence>MSTLAKIEALLFVAGEDGIRVRQLAELLSLPPTGIQQSLGKLAQKYEKDPDSSLALIETSGAYRLVTKPQFAEILKEYSKAPINQSLSRAALETLSIIAYKQPITRIEIDAIRGVNSSGALAKLQAFDLIKEDGKKEVLGRPNLYVTTDYFLDYMGINHLEELPVIDELEIQAQESQLFGERIEEDENQ</sequence>
<evidence type="ECO:0000255" key="1">
    <source>
        <dbReference type="HAMAP-Rule" id="MF_01804"/>
    </source>
</evidence>
<accession>C1CG99</accession>
<keyword id="KW-0131">Cell cycle</keyword>
<keyword id="KW-0132">Cell division</keyword>
<keyword id="KW-0159">Chromosome partition</keyword>
<keyword id="KW-0963">Cytoplasm</keyword>
<name>SCPB_STRZJ</name>
<gene>
    <name evidence="1" type="primary">scpB</name>
    <name type="ordered locus">SPJ_1780</name>
</gene>
<dbReference type="EMBL" id="CP000919">
    <property type="protein sequence ID" value="ACO19927.1"/>
    <property type="molecule type" value="Genomic_DNA"/>
</dbReference>
<dbReference type="RefSeq" id="WP_000105310.1">
    <property type="nucleotide sequence ID" value="NC_012466.1"/>
</dbReference>
<dbReference type="SMR" id="C1CG99"/>
<dbReference type="GeneID" id="45219111"/>
<dbReference type="KEGG" id="sjj:SPJ_1780"/>
<dbReference type="HOGENOM" id="CLU_045647_5_3_9"/>
<dbReference type="Proteomes" id="UP000002206">
    <property type="component" value="Chromosome"/>
</dbReference>
<dbReference type="GO" id="GO:0005737">
    <property type="term" value="C:cytoplasm"/>
    <property type="evidence" value="ECO:0007669"/>
    <property type="project" value="UniProtKB-SubCell"/>
</dbReference>
<dbReference type="GO" id="GO:0051301">
    <property type="term" value="P:cell division"/>
    <property type="evidence" value="ECO:0007669"/>
    <property type="project" value="UniProtKB-KW"/>
</dbReference>
<dbReference type="GO" id="GO:0051304">
    <property type="term" value="P:chromosome separation"/>
    <property type="evidence" value="ECO:0007669"/>
    <property type="project" value="InterPro"/>
</dbReference>
<dbReference type="GO" id="GO:0006260">
    <property type="term" value="P:DNA replication"/>
    <property type="evidence" value="ECO:0007669"/>
    <property type="project" value="UniProtKB-UniRule"/>
</dbReference>
<dbReference type="FunFam" id="1.10.10.10:FF:000507">
    <property type="entry name" value="Segregation and condensation protein B"/>
    <property type="match status" value="1"/>
</dbReference>
<dbReference type="FunFam" id="1.10.10.10:FF:000508">
    <property type="entry name" value="Segregation and condensation protein B"/>
    <property type="match status" value="1"/>
</dbReference>
<dbReference type="Gene3D" id="1.10.10.10">
    <property type="entry name" value="Winged helix-like DNA-binding domain superfamily/Winged helix DNA-binding domain"/>
    <property type="match status" value="2"/>
</dbReference>
<dbReference type="HAMAP" id="MF_01804">
    <property type="entry name" value="ScpB"/>
    <property type="match status" value="1"/>
</dbReference>
<dbReference type="InterPro" id="IPR005234">
    <property type="entry name" value="ScpB_csome_segregation"/>
</dbReference>
<dbReference type="InterPro" id="IPR036388">
    <property type="entry name" value="WH-like_DNA-bd_sf"/>
</dbReference>
<dbReference type="InterPro" id="IPR036390">
    <property type="entry name" value="WH_DNA-bd_sf"/>
</dbReference>
<dbReference type="NCBIfam" id="TIGR00281">
    <property type="entry name" value="SMC-Scp complex subunit ScpB"/>
    <property type="match status" value="1"/>
</dbReference>
<dbReference type="PANTHER" id="PTHR34298">
    <property type="entry name" value="SEGREGATION AND CONDENSATION PROTEIN B"/>
    <property type="match status" value="1"/>
</dbReference>
<dbReference type="PANTHER" id="PTHR34298:SF2">
    <property type="entry name" value="SEGREGATION AND CONDENSATION PROTEIN B"/>
    <property type="match status" value="1"/>
</dbReference>
<dbReference type="Pfam" id="PF04079">
    <property type="entry name" value="SMC_ScpB"/>
    <property type="match status" value="1"/>
</dbReference>
<dbReference type="PIRSF" id="PIRSF019345">
    <property type="entry name" value="ScpB"/>
    <property type="match status" value="1"/>
</dbReference>
<dbReference type="SUPFAM" id="SSF46785">
    <property type="entry name" value="Winged helix' DNA-binding domain"/>
    <property type="match status" value="2"/>
</dbReference>
<protein>
    <recommendedName>
        <fullName evidence="1">Segregation and condensation protein B</fullName>
    </recommendedName>
</protein>
<comment type="function">
    <text evidence="1">Participates in chromosomal partition during cell division. May act via the formation of a condensin-like complex containing Smc and ScpA that pull DNA away from mid-cell into both cell halves.</text>
</comment>
<comment type="subunit">
    <text evidence="1">Homodimer. Homodimerization may be required to stabilize the binding of ScpA to the Smc head domains. Component of a cohesin-like complex composed of ScpA, ScpB and the Smc homodimer, in which ScpA and ScpB bind to the head domain of Smc. The presence of the three proteins is required for the association of the complex with DNA.</text>
</comment>
<comment type="subcellular location">
    <subcellularLocation>
        <location evidence="1">Cytoplasm</location>
    </subcellularLocation>
    <text evidence="1">Associated with two foci at the outer edges of the nucleoid region in young cells, and at four foci within both cell halves in older cells.</text>
</comment>
<comment type="similarity">
    <text evidence="1">Belongs to the ScpB family.</text>
</comment>
<reference key="1">
    <citation type="journal article" date="2010" name="Genome Biol.">
        <title>Structure and dynamics of the pan-genome of Streptococcus pneumoniae and closely related species.</title>
        <authorList>
            <person name="Donati C."/>
            <person name="Hiller N.L."/>
            <person name="Tettelin H."/>
            <person name="Muzzi A."/>
            <person name="Croucher N.J."/>
            <person name="Angiuoli S.V."/>
            <person name="Oggioni M."/>
            <person name="Dunning Hotopp J.C."/>
            <person name="Hu F.Z."/>
            <person name="Riley D.R."/>
            <person name="Covacci A."/>
            <person name="Mitchell T.J."/>
            <person name="Bentley S.D."/>
            <person name="Kilian M."/>
            <person name="Ehrlich G.D."/>
            <person name="Rappuoli R."/>
            <person name="Moxon E.R."/>
            <person name="Masignani V."/>
        </authorList>
    </citation>
    <scope>NUCLEOTIDE SEQUENCE [LARGE SCALE GENOMIC DNA]</scope>
    <source>
        <strain>JJA</strain>
    </source>
</reference>
<feature type="chain" id="PRO_1000187545" description="Segregation and condensation protein B">
    <location>
        <begin position="1"/>
        <end position="189"/>
    </location>
</feature>